<gene>
    <name evidence="1" type="primary">rplY</name>
    <name type="ordered locus">VFMJ11_0900</name>
</gene>
<organism>
    <name type="scientific">Aliivibrio fischeri (strain MJ11)</name>
    <name type="common">Vibrio fischeri</name>
    <dbReference type="NCBI Taxonomy" id="388396"/>
    <lineage>
        <taxon>Bacteria</taxon>
        <taxon>Pseudomonadati</taxon>
        <taxon>Pseudomonadota</taxon>
        <taxon>Gammaproteobacteria</taxon>
        <taxon>Vibrionales</taxon>
        <taxon>Vibrionaceae</taxon>
        <taxon>Aliivibrio</taxon>
    </lineage>
</organism>
<reference key="1">
    <citation type="submission" date="2008-08" db="EMBL/GenBank/DDBJ databases">
        <title>Complete sequence of Vibrio fischeri strain MJ11.</title>
        <authorList>
            <person name="Mandel M.J."/>
            <person name="Stabb E.V."/>
            <person name="Ruby E.G."/>
            <person name="Ferriera S."/>
            <person name="Johnson J."/>
            <person name="Kravitz S."/>
            <person name="Beeson K."/>
            <person name="Sutton G."/>
            <person name="Rogers Y.-H."/>
            <person name="Friedman R."/>
            <person name="Frazier M."/>
            <person name="Venter J.C."/>
        </authorList>
    </citation>
    <scope>NUCLEOTIDE SEQUENCE [LARGE SCALE GENOMIC DNA]</scope>
    <source>
        <strain>MJ11</strain>
    </source>
</reference>
<name>RL25_ALIFM</name>
<protein>
    <recommendedName>
        <fullName evidence="1">Large ribosomal subunit protein bL25</fullName>
    </recommendedName>
    <alternativeName>
        <fullName evidence="2">50S ribosomal protein L25</fullName>
    </alternativeName>
</protein>
<evidence type="ECO:0000255" key="1">
    <source>
        <dbReference type="HAMAP-Rule" id="MF_01336"/>
    </source>
</evidence>
<evidence type="ECO:0000305" key="2"/>
<accession>B5FCG1</accession>
<comment type="function">
    <text evidence="1">This is one of the proteins that binds to the 5S RNA in the ribosome where it forms part of the central protuberance.</text>
</comment>
<comment type="subunit">
    <text evidence="1">Part of the 50S ribosomal subunit; part of the 5S rRNA/L5/L18/L25 subcomplex. Contacts the 5S rRNA. Binds to the 5S rRNA independently of L5 and L18.</text>
</comment>
<comment type="similarity">
    <text evidence="1">Belongs to the bacterial ribosomal protein bL25 family.</text>
</comment>
<proteinExistence type="inferred from homology"/>
<keyword id="KW-0687">Ribonucleoprotein</keyword>
<keyword id="KW-0689">Ribosomal protein</keyword>
<keyword id="KW-0694">RNA-binding</keyword>
<keyword id="KW-0699">rRNA-binding</keyword>
<sequence>MKFEAVVRTEQGKGASRRLRHAGQFPAIVYGGTEAPVSIALDHDAVINQMDKPAFYEAIELVIDGAVVKVKPQDVQRHAFKPKVEHMDFIRI</sequence>
<feature type="chain" id="PRO_1000142600" description="Large ribosomal subunit protein bL25">
    <location>
        <begin position="1"/>
        <end position="92"/>
    </location>
</feature>
<dbReference type="EMBL" id="CP001139">
    <property type="protein sequence ID" value="ACH66048.1"/>
    <property type="molecule type" value="Genomic_DNA"/>
</dbReference>
<dbReference type="RefSeq" id="WP_005418367.1">
    <property type="nucleotide sequence ID" value="NC_011184.1"/>
</dbReference>
<dbReference type="SMR" id="B5FCG1"/>
<dbReference type="KEGG" id="vfm:VFMJ11_0900"/>
<dbReference type="HOGENOM" id="CLU_137946_0_0_6"/>
<dbReference type="Proteomes" id="UP000001857">
    <property type="component" value="Chromosome I"/>
</dbReference>
<dbReference type="GO" id="GO:0022625">
    <property type="term" value="C:cytosolic large ribosomal subunit"/>
    <property type="evidence" value="ECO:0007669"/>
    <property type="project" value="TreeGrafter"/>
</dbReference>
<dbReference type="GO" id="GO:0008097">
    <property type="term" value="F:5S rRNA binding"/>
    <property type="evidence" value="ECO:0007669"/>
    <property type="project" value="InterPro"/>
</dbReference>
<dbReference type="GO" id="GO:0003735">
    <property type="term" value="F:structural constituent of ribosome"/>
    <property type="evidence" value="ECO:0007669"/>
    <property type="project" value="InterPro"/>
</dbReference>
<dbReference type="GO" id="GO:0006412">
    <property type="term" value="P:translation"/>
    <property type="evidence" value="ECO:0007669"/>
    <property type="project" value="UniProtKB-UniRule"/>
</dbReference>
<dbReference type="CDD" id="cd00495">
    <property type="entry name" value="Ribosomal_L25_TL5_CTC"/>
    <property type="match status" value="1"/>
</dbReference>
<dbReference type="FunFam" id="2.40.240.10:FF:000002">
    <property type="entry name" value="50S ribosomal protein L25"/>
    <property type="match status" value="1"/>
</dbReference>
<dbReference type="Gene3D" id="2.40.240.10">
    <property type="entry name" value="Ribosomal Protein L25, Chain P"/>
    <property type="match status" value="1"/>
</dbReference>
<dbReference type="HAMAP" id="MF_01336">
    <property type="entry name" value="Ribosomal_bL25"/>
    <property type="match status" value="1"/>
</dbReference>
<dbReference type="InterPro" id="IPR020056">
    <property type="entry name" value="Rbsml_bL25/Gln-tRNA_synth_N"/>
</dbReference>
<dbReference type="InterPro" id="IPR011035">
    <property type="entry name" value="Ribosomal_bL25/Gln-tRNA_synth"/>
</dbReference>
<dbReference type="InterPro" id="IPR020055">
    <property type="entry name" value="Ribosomal_bL25_short"/>
</dbReference>
<dbReference type="InterPro" id="IPR029751">
    <property type="entry name" value="Ribosomal_L25_dom"/>
</dbReference>
<dbReference type="InterPro" id="IPR020930">
    <property type="entry name" value="Ribosomal_uL5_bac-type"/>
</dbReference>
<dbReference type="NCBIfam" id="NF004612">
    <property type="entry name" value="PRK05943.1"/>
    <property type="match status" value="1"/>
</dbReference>
<dbReference type="PANTHER" id="PTHR33284">
    <property type="entry name" value="RIBOSOMAL PROTEIN L25/GLN-TRNA SYNTHETASE, ANTI-CODON-BINDING DOMAIN-CONTAINING PROTEIN"/>
    <property type="match status" value="1"/>
</dbReference>
<dbReference type="PANTHER" id="PTHR33284:SF1">
    <property type="entry name" value="RIBOSOMAL PROTEIN L25_GLN-TRNA SYNTHETASE, ANTI-CODON-BINDING DOMAIN-CONTAINING PROTEIN"/>
    <property type="match status" value="1"/>
</dbReference>
<dbReference type="Pfam" id="PF01386">
    <property type="entry name" value="Ribosomal_L25p"/>
    <property type="match status" value="1"/>
</dbReference>
<dbReference type="SUPFAM" id="SSF50715">
    <property type="entry name" value="Ribosomal protein L25-like"/>
    <property type="match status" value="1"/>
</dbReference>